<accession>Q8LEA0</accession>
<accession>Q9LJV0</accession>
<protein>
    <recommendedName>
        <fullName>Probable tetraacyldisaccharide 4'-kinase, mitochondrial</fullName>
        <ecNumber>2.7.1.130</ecNumber>
    </recommendedName>
    <alternativeName>
        <fullName>Protein LIPID X 4'-kinase</fullName>
        <shortName>AtLpxK</shortName>
    </alternativeName>
</protein>
<gene>
    <name type="primary">LPXK</name>
    <name type="ordered locus">At3g20480</name>
    <name type="ORF">K10D20.1</name>
</gene>
<evidence type="ECO:0000255" key="1"/>
<evidence type="ECO:0000269" key="2">
    <source>
    </source>
</evidence>
<evidence type="ECO:0000305" key="3"/>
<reference key="1">
    <citation type="journal article" date="2000" name="DNA Res.">
        <title>Structural analysis of Arabidopsis thaliana chromosome 3. II. Sequence features of the 4,251,695 bp regions covered by 90 P1, TAC and BAC clones.</title>
        <authorList>
            <person name="Kaneko T."/>
            <person name="Katoh T."/>
            <person name="Sato S."/>
            <person name="Nakamura Y."/>
            <person name="Asamizu E."/>
            <person name="Tabata S."/>
        </authorList>
    </citation>
    <scope>NUCLEOTIDE SEQUENCE [LARGE SCALE GENOMIC DNA]</scope>
    <source>
        <strain>cv. Columbia</strain>
    </source>
</reference>
<reference key="2">
    <citation type="journal article" date="2017" name="Plant J.">
        <title>Araport11: a complete reannotation of the Arabidopsis thaliana reference genome.</title>
        <authorList>
            <person name="Cheng C.Y."/>
            <person name="Krishnakumar V."/>
            <person name="Chan A.P."/>
            <person name="Thibaud-Nissen F."/>
            <person name="Schobel S."/>
            <person name="Town C.D."/>
        </authorList>
    </citation>
    <scope>GENOME REANNOTATION</scope>
    <source>
        <strain>cv. Columbia</strain>
    </source>
</reference>
<reference key="3">
    <citation type="submission" date="2002-03" db="EMBL/GenBank/DDBJ databases">
        <title>Full-length cDNA from Arabidopsis thaliana.</title>
        <authorList>
            <person name="Brover V.V."/>
            <person name="Troukhan M.E."/>
            <person name="Alexandrov N.A."/>
            <person name="Lu Y.-P."/>
            <person name="Flavell R.B."/>
            <person name="Feldmann K.A."/>
        </authorList>
    </citation>
    <scope>NUCLEOTIDE SEQUENCE [LARGE SCALE MRNA]</scope>
</reference>
<reference key="4">
    <citation type="journal article" date="2011" name="Proc. Natl. Acad. Sci. U.S.A.">
        <title>Pathway for lipid A biosynthesis in Arabidopsis thaliana resembling that of Escherichia coli.</title>
        <authorList>
            <person name="Li C."/>
            <person name="Guan Z."/>
            <person name="Liu D."/>
            <person name="Raetz C.R."/>
        </authorList>
    </citation>
    <scope>PATHWAY</scope>
    <scope>SUBCELLULAR LOCATION</scope>
    <scope>GENE FAMILY</scope>
    <scope>NOMENCLATURE</scope>
    <scope>DISRUPTION PHENOTYPE</scope>
</reference>
<comment type="function">
    <text evidence="3">Involved in the biosynthesis of lipid A, a phosphorylated glycolipid that in bacteria anchors the lipopolysaccharide to the outer membrane of the cell. Transfers the gamma-phosphate of ATP to the 4'-position of a tetraacyldisaccharide 1-phosphate intermediate (termed DS-1-P) to form tetraacyldisaccharide 1,4'-bis-phosphate (lipid IVA). Lipid A-like molecules in plants may serve as structural components of the outer membranes of mitochondria and/or chloroplasts, or may be involved in signal transduction or plant defense responses (Potential).</text>
</comment>
<comment type="catalytic activity">
    <reaction>
        <text>a lipid A disaccharide + ATP = a lipid IVA + ADP + H(+)</text>
        <dbReference type="Rhea" id="RHEA:67840"/>
        <dbReference type="ChEBI" id="CHEBI:15378"/>
        <dbReference type="ChEBI" id="CHEBI:30616"/>
        <dbReference type="ChEBI" id="CHEBI:176343"/>
        <dbReference type="ChEBI" id="CHEBI:176425"/>
        <dbReference type="ChEBI" id="CHEBI:456216"/>
        <dbReference type="EC" id="2.7.1.130"/>
    </reaction>
</comment>
<comment type="pathway">
    <text evidence="2">Glycolipid biosynthesis; lipid IV(A) biosynthesis; lipid IV(A) from (3R)-3-hydroxytetradecanoyl-[acyl-carrier-protein] and UDP-N-acetyl-alpha-D-glucosamine: step 6/6.</text>
</comment>
<comment type="subcellular location">
    <subcellularLocation>
        <location evidence="2">Mitochondrion</location>
    </subcellularLocation>
</comment>
<comment type="alternative products">
    <event type="alternative splicing"/>
    <isoform>
        <id>Q8LEA0-1</id>
        <name>1</name>
        <sequence type="displayed"/>
    </isoform>
    <text>A number of isoforms are produced. According to EST sequences.</text>
</comment>
<comment type="disruption phenotype">
    <text evidence="2">No visible phenotype under normal growth conditions, but plants lacking LPXK accumulate high levels of disaccharide-1-phosphate (DS-1-P).</text>
</comment>
<comment type="similarity">
    <text evidence="3">Belongs to the LpxK family.</text>
</comment>
<comment type="sequence caution" evidence="3">
    <conflict type="erroneous gene model prediction">
        <sequence resource="EMBL-CDS" id="BAB01156"/>
    </conflict>
</comment>
<proteinExistence type="evidence at transcript level"/>
<sequence length="395" mass="44199">MEKLRKVVNEIAYTRVHTNSPALHRSLVPFLTIASSLYGVALQIRRSLYRYSLLQKHRLPVPVISVGNLSWGGNGKTPMVEYISQFLVDSGLTPLILTRGYAGGDEVKMLERHLRGGPVKIGVGANRAATAALFLDKYGCVDSSSLRSFFDLHERAQVWTISEKIGCIILDDGMQHWSLSRDLEIVMLNGLNPWGNGHLMPHGPLREPLLALERADVAVVHHVDLITKQSLRDIENMIQGFKKSIPIFYSKMVPKYLFDVKNARSHVALEALRCASVLCVSAIGSADAFVKSIEMTGAHYVDRLDFSDHHLFEAEDVETMSRRAKGLEHKSNCKPIIVVTEKDYDRDPEILKCLDSYTVLVLCSELQITPILETDVDSFNYTLMKALAAKFYVSS</sequence>
<keyword id="KW-0025">Alternative splicing</keyword>
<keyword id="KW-0067">ATP-binding</keyword>
<keyword id="KW-0418">Kinase</keyword>
<keyword id="KW-0441">Lipid A biosynthesis</keyword>
<keyword id="KW-0444">Lipid biosynthesis</keyword>
<keyword id="KW-0443">Lipid metabolism</keyword>
<keyword id="KW-0496">Mitochondrion</keyword>
<keyword id="KW-0547">Nucleotide-binding</keyword>
<keyword id="KW-1185">Reference proteome</keyword>
<keyword id="KW-0808">Transferase</keyword>
<keyword id="KW-0809">Transit peptide</keyword>
<name>LPXK_ARATH</name>
<feature type="transit peptide" description="Mitochondrion" evidence="1">
    <location>
        <begin position="1"/>
        <end position="32"/>
    </location>
</feature>
<feature type="chain" id="PRO_0000421461" description="Probable tetraacyldisaccharide 4'-kinase, mitochondrial">
    <location>
        <begin position="33"/>
        <end position="395"/>
    </location>
</feature>
<dbReference type="EC" id="2.7.1.130"/>
<dbReference type="EMBL" id="AP000410">
    <property type="protein sequence ID" value="BAB01156.1"/>
    <property type="status" value="ALT_SEQ"/>
    <property type="molecule type" value="Genomic_DNA"/>
</dbReference>
<dbReference type="EMBL" id="CP002686">
    <property type="protein sequence ID" value="AEE76385.1"/>
    <property type="molecule type" value="Genomic_DNA"/>
</dbReference>
<dbReference type="EMBL" id="AY085541">
    <property type="protein sequence ID" value="AAM62765.1"/>
    <property type="molecule type" value="mRNA"/>
</dbReference>
<dbReference type="RefSeq" id="NP_001327104.1">
    <property type="nucleotide sequence ID" value="NM_001338484.1"/>
</dbReference>
<dbReference type="RefSeq" id="NP_566663.1">
    <molecule id="Q8LEA0-1"/>
    <property type="nucleotide sequence ID" value="NM_112940.3"/>
</dbReference>
<dbReference type="SMR" id="Q8LEA0"/>
<dbReference type="FunCoup" id="Q8LEA0">
    <property type="interactions" value="7"/>
</dbReference>
<dbReference type="STRING" id="3702.Q8LEA0"/>
<dbReference type="iPTMnet" id="Q8LEA0"/>
<dbReference type="PaxDb" id="3702-AT3G20480.1"/>
<dbReference type="EnsemblPlants" id="AT3G20480.1">
    <molecule id="Q8LEA0-1"/>
    <property type="protein sequence ID" value="AT3G20480.1"/>
    <property type="gene ID" value="AT3G20480"/>
</dbReference>
<dbReference type="GeneID" id="821594"/>
<dbReference type="Gramene" id="AT3G20480.1">
    <molecule id="Q8LEA0-1"/>
    <property type="protein sequence ID" value="AT3G20480.1"/>
    <property type="gene ID" value="AT3G20480"/>
</dbReference>
<dbReference type="KEGG" id="ath:AT3G20480"/>
<dbReference type="Araport" id="AT3G20480"/>
<dbReference type="TAIR" id="AT3G20480">
    <property type="gene designation" value="LPXK"/>
</dbReference>
<dbReference type="eggNOG" id="ENOG502QRUA">
    <property type="taxonomic scope" value="Eukaryota"/>
</dbReference>
<dbReference type="HOGENOM" id="CLU_038816_4_0_1"/>
<dbReference type="InParanoid" id="Q8LEA0"/>
<dbReference type="OMA" id="RAFPDHH"/>
<dbReference type="PhylomeDB" id="Q8LEA0"/>
<dbReference type="UniPathway" id="UPA00359">
    <property type="reaction ID" value="UER00482"/>
</dbReference>
<dbReference type="PRO" id="PR:Q8LEA0"/>
<dbReference type="Proteomes" id="UP000006548">
    <property type="component" value="Chromosome 3"/>
</dbReference>
<dbReference type="ExpressionAtlas" id="Q8LEA0">
    <property type="expression patterns" value="baseline and differential"/>
</dbReference>
<dbReference type="GO" id="GO:0016020">
    <property type="term" value="C:membrane"/>
    <property type="evidence" value="ECO:0007669"/>
    <property type="project" value="GOC"/>
</dbReference>
<dbReference type="GO" id="GO:0005739">
    <property type="term" value="C:mitochondrion"/>
    <property type="evidence" value="ECO:0000314"/>
    <property type="project" value="TAIR"/>
</dbReference>
<dbReference type="GO" id="GO:0005524">
    <property type="term" value="F:ATP binding"/>
    <property type="evidence" value="ECO:0007669"/>
    <property type="project" value="UniProtKB-KW"/>
</dbReference>
<dbReference type="GO" id="GO:0009029">
    <property type="term" value="F:tetraacyldisaccharide 4'-kinase activity"/>
    <property type="evidence" value="ECO:0000315"/>
    <property type="project" value="UniProtKB"/>
</dbReference>
<dbReference type="GO" id="GO:0009245">
    <property type="term" value="P:lipid A biosynthetic process"/>
    <property type="evidence" value="ECO:0007669"/>
    <property type="project" value="UniProtKB-KW"/>
</dbReference>
<dbReference type="GO" id="GO:2001289">
    <property type="term" value="P:lipid X metabolic process"/>
    <property type="evidence" value="ECO:0000315"/>
    <property type="project" value="UniProtKB"/>
</dbReference>
<dbReference type="HAMAP" id="MF_00409">
    <property type="entry name" value="LpxK"/>
    <property type="match status" value="1"/>
</dbReference>
<dbReference type="InterPro" id="IPR003758">
    <property type="entry name" value="LpxK"/>
</dbReference>
<dbReference type="NCBIfam" id="TIGR00682">
    <property type="entry name" value="lpxK"/>
    <property type="match status" value="1"/>
</dbReference>
<dbReference type="PANTHER" id="PTHR42724">
    <property type="entry name" value="TETRAACYLDISACCHARIDE 4'-KINASE"/>
    <property type="match status" value="1"/>
</dbReference>
<dbReference type="PANTHER" id="PTHR42724:SF1">
    <property type="entry name" value="TETRAACYLDISACCHARIDE 4'-KINASE, MITOCHONDRIAL-RELATED"/>
    <property type="match status" value="1"/>
</dbReference>
<dbReference type="Pfam" id="PF02606">
    <property type="entry name" value="LpxK"/>
    <property type="match status" value="2"/>
</dbReference>
<organism>
    <name type="scientific">Arabidopsis thaliana</name>
    <name type="common">Mouse-ear cress</name>
    <dbReference type="NCBI Taxonomy" id="3702"/>
    <lineage>
        <taxon>Eukaryota</taxon>
        <taxon>Viridiplantae</taxon>
        <taxon>Streptophyta</taxon>
        <taxon>Embryophyta</taxon>
        <taxon>Tracheophyta</taxon>
        <taxon>Spermatophyta</taxon>
        <taxon>Magnoliopsida</taxon>
        <taxon>eudicotyledons</taxon>
        <taxon>Gunneridae</taxon>
        <taxon>Pentapetalae</taxon>
        <taxon>rosids</taxon>
        <taxon>malvids</taxon>
        <taxon>Brassicales</taxon>
        <taxon>Brassicaceae</taxon>
        <taxon>Camelineae</taxon>
        <taxon>Arabidopsis</taxon>
    </lineage>
</organism>